<comment type="function">
    <text evidence="2 3 5 6 7">Sulfotransferase that utilizes 3'-phospho-5'-adenylyl sulfate (PAPS) as sulfonate donor to catalyze the sulfate conjugation of estradiol and estrone (PubMed:11006110, PubMed:11884392, PubMed:7779757). Is a key enzyme in estrogen homeostasis, the sulfation of estrogens leads to their inactivation. Also sulfates dehydroepiandrosterone (DHEA), pregnenolone, (24S)-hydroxycholesterol and xenobiotic compounds like ethinylestradiol, equalenin, diethyl stilbesterol and 1-naphthol at significantly lower efficiency (PubMed:11006110, PubMed:19589875). Does not sulfonate cortisol, testosterone and dopamine (PubMed:11006110, PubMed:7779757). May play a role in gut microbiota-host metabolic interaction. O-sulfonates 4-ethylphenol (4-EP), a dietary tyrosine-derived metabolite produced by gut bacteria. The product 4-EPS crosses the blood-brain barrier and may negatively regulate oligodendrocyte maturation and myelination, affecting the functional connectivity of different brain regions associated with the limbic system.</text>
</comment>
<comment type="catalytic activity">
    <reaction evidence="2 3 7">
        <text>estrone + 3'-phosphoadenylyl sulfate = estrone 3-sulfate + adenosine 3',5'-bisphosphate + H(+)</text>
        <dbReference type="Rhea" id="RHEA:15973"/>
        <dbReference type="ChEBI" id="CHEBI:15378"/>
        <dbReference type="ChEBI" id="CHEBI:17263"/>
        <dbReference type="ChEBI" id="CHEBI:58339"/>
        <dbReference type="ChEBI" id="CHEBI:58343"/>
        <dbReference type="ChEBI" id="CHEBI:60050"/>
        <dbReference type="EC" id="2.8.2.4"/>
    </reaction>
    <physiologicalReaction direction="left-to-right" evidence="12">
        <dbReference type="Rhea" id="RHEA:15974"/>
    </physiologicalReaction>
</comment>
<comment type="catalytic activity">
    <reaction evidence="5">
        <text>(24S)-hydroxycholesterol + 3'-phosphoadenylyl sulfate = (24S)-hydroxycholesterol 3-sulfate + adenosine 3',5'-bisphosphate + H(+)</text>
        <dbReference type="Rhea" id="RHEA:52348"/>
        <dbReference type="ChEBI" id="CHEBI:15378"/>
        <dbReference type="ChEBI" id="CHEBI:34310"/>
        <dbReference type="ChEBI" id="CHEBI:58339"/>
        <dbReference type="ChEBI" id="CHEBI:58343"/>
        <dbReference type="ChEBI" id="CHEBI:136567"/>
    </reaction>
    <physiologicalReaction direction="left-to-right" evidence="13">
        <dbReference type="Rhea" id="RHEA:52349"/>
    </physiologicalReaction>
</comment>
<comment type="catalytic activity">
    <reaction evidence="2 7">
        <text>17beta-estradiol + 3'-phosphoadenylyl sulfate = 17beta-estradiol 3-sulfate + adenosine 3',5'-bisphosphate + H(+)</text>
        <dbReference type="Rhea" id="RHEA:52372"/>
        <dbReference type="ChEBI" id="CHEBI:15378"/>
        <dbReference type="ChEBI" id="CHEBI:16469"/>
        <dbReference type="ChEBI" id="CHEBI:58339"/>
        <dbReference type="ChEBI" id="CHEBI:58343"/>
        <dbReference type="ChEBI" id="CHEBI:136582"/>
    </reaction>
    <physiologicalReaction direction="left-to-right" evidence="15">
        <dbReference type="Rhea" id="RHEA:52373"/>
    </physiologicalReaction>
</comment>
<comment type="catalytic activity">
    <reaction evidence="2">
        <text>3beta-hydroxyandrost-5-en-17-one + 3'-phosphoadenylyl sulfate = dehydroepiandrosterone 3-sulfate + adenosine 3',5'-bisphosphate + H(+)</text>
        <dbReference type="Rhea" id="RHEA:51216"/>
        <dbReference type="ChEBI" id="CHEBI:15378"/>
        <dbReference type="ChEBI" id="CHEBI:28689"/>
        <dbReference type="ChEBI" id="CHEBI:57905"/>
        <dbReference type="ChEBI" id="CHEBI:58339"/>
        <dbReference type="ChEBI" id="CHEBI:58343"/>
    </reaction>
</comment>
<comment type="catalytic activity">
    <reaction evidence="6">
        <text>4-ethylphenol + 3'-phosphoadenylyl sulfate = 4-ethylphenyl sulfate + adenosine 3',5'-bisphosphate + H(+)</text>
        <dbReference type="Rhea" id="RHEA:70607"/>
        <dbReference type="ChEBI" id="CHEBI:15378"/>
        <dbReference type="ChEBI" id="CHEBI:49584"/>
        <dbReference type="ChEBI" id="CHEBI:58339"/>
        <dbReference type="ChEBI" id="CHEBI:58343"/>
        <dbReference type="ChEBI" id="CHEBI:133681"/>
    </reaction>
    <physiologicalReaction direction="left-to-right" evidence="14">
        <dbReference type="Rhea" id="RHEA:70608"/>
    </physiologicalReaction>
</comment>
<comment type="activity regulation">
    <text evidence="2">Inhibited by estradiol.</text>
</comment>
<comment type="biophysicochemical properties">
    <kinetics>
        <KM evidence="2">0.3 uM for 17beta-estradiol</KM>
        <KM evidence="2">0.2 uM for estrone</KM>
        <KM evidence="2">0.2 uM for DHEA</KM>
        <KM evidence="2">32220 uM for dopamine</KM>
        <KM evidence="2">76.6 uM for p-nitrophenol</KM>
        <KM evidence="5">0.9 uM for (24S)-hydroxycholesterol</KM>
        <KM evidence="3">0.66 uM for PAPS</KM>
        <KM evidence="2">0.46 uM for PAPS</KM>
        <Vmax evidence="2">37.2 nmol/min/mg enzyme with 17beta-estradiol</Vmax>
        <Vmax evidence="2">16.3 nmol/min/mg enzyme with estrone</Vmax>
        <Vmax evidence="2">5.5 nmol/min/mg enzyme with DHEA</Vmax>
        <Vmax>13.3 nmol/min/mg enzyme with dopaminne</Vmax>
        <Vmax evidence="2">135.9 nmol/min/mg enzyme with p-nitrophenol</Vmax>
        <text evidence="5">kcat is 55 min(-1) with (24S)-hydroxycholesterol.</text>
    </kinetics>
</comment>
<comment type="subunit">
    <text evidence="3 4">Homodimer.</text>
</comment>
<comment type="interaction">
    <interactant intactId="EBI-712512">
        <id>P49888</id>
    </interactant>
    <interactant intactId="EBI-742764">
        <id>O76083</id>
        <label>PDE9A</label>
    </interactant>
    <organismsDiffer>false</organismsDiffer>
    <experiments>3</experiments>
</comment>
<comment type="interaction">
    <interactant intactId="EBI-712512">
        <id>P49888</id>
    </interactant>
    <interactant intactId="EBI-11524542">
        <id>O76083-2</id>
        <label>PDE9A</label>
    </interactant>
    <organismsDiffer>false</organismsDiffer>
    <experiments>3</experiments>
</comment>
<comment type="subcellular location">
    <subcellularLocation>
        <location evidence="2">Cytoplasm</location>
        <location evidence="2">Cytosol</location>
    </subcellularLocation>
</comment>
<comment type="tissue specificity">
    <text>Liver, intestine and at lower level in the kidney.</text>
</comment>
<comment type="similarity">
    <text evidence="11">Belongs to the sulfotransferase 1 family.</text>
</comment>
<dbReference type="EC" id="2.8.2.4" evidence="3 7"/>
<dbReference type="EMBL" id="U08098">
    <property type="protein sequence ID" value="AAA82125.1"/>
    <property type="molecule type" value="mRNA"/>
</dbReference>
<dbReference type="EMBL" id="U20521">
    <property type="protein sequence ID" value="AAC50286.1"/>
    <property type="molecule type" value="Genomic_DNA"/>
</dbReference>
<dbReference type="EMBL" id="U20515">
    <property type="protein sequence ID" value="AAC50286.1"/>
    <property type="status" value="JOINED"/>
    <property type="molecule type" value="Genomic_DNA"/>
</dbReference>
<dbReference type="EMBL" id="U20516">
    <property type="protein sequence ID" value="AAC50286.1"/>
    <property type="status" value="JOINED"/>
    <property type="molecule type" value="Genomic_DNA"/>
</dbReference>
<dbReference type="EMBL" id="U20517">
    <property type="protein sequence ID" value="AAC50286.1"/>
    <property type="status" value="JOINED"/>
    <property type="molecule type" value="Genomic_DNA"/>
</dbReference>
<dbReference type="EMBL" id="U20518">
    <property type="protein sequence ID" value="AAC50286.1"/>
    <property type="status" value="JOINED"/>
    <property type="molecule type" value="Genomic_DNA"/>
</dbReference>
<dbReference type="EMBL" id="U20519">
    <property type="protein sequence ID" value="AAC50286.1"/>
    <property type="status" value="JOINED"/>
    <property type="molecule type" value="Genomic_DNA"/>
</dbReference>
<dbReference type="EMBL" id="U20520">
    <property type="protein sequence ID" value="AAC50286.1"/>
    <property type="status" value="JOINED"/>
    <property type="molecule type" value="Genomic_DNA"/>
</dbReference>
<dbReference type="EMBL" id="S77383">
    <property type="protein sequence ID" value="AAB34601.1"/>
    <property type="molecule type" value="mRNA"/>
</dbReference>
<dbReference type="EMBL" id="Y11195">
    <property type="protein sequence ID" value="CAA72079.1"/>
    <property type="molecule type" value="mRNA"/>
</dbReference>
<dbReference type="EMBL" id="AY436634">
    <property type="protein sequence ID" value="AAQ97179.1"/>
    <property type="molecule type" value="Genomic_DNA"/>
</dbReference>
<dbReference type="EMBL" id="BC027956">
    <property type="protein sequence ID" value="AAH27956.1"/>
    <property type="molecule type" value="mRNA"/>
</dbReference>
<dbReference type="EMBL" id="U55764">
    <property type="protein sequence ID" value="AAB51658.1"/>
    <property type="molecule type" value="mRNA"/>
</dbReference>
<dbReference type="CCDS" id="CCDS3531.1"/>
<dbReference type="PIR" id="JC2229">
    <property type="entry name" value="JC2229"/>
</dbReference>
<dbReference type="RefSeq" id="NP_005411.1">
    <property type="nucleotide sequence ID" value="NM_005420.3"/>
</dbReference>
<dbReference type="RefSeq" id="XP_047272056.1">
    <property type="nucleotide sequence ID" value="XM_047416100.1"/>
</dbReference>
<dbReference type="RefSeq" id="XP_047272057.1">
    <property type="nucleotide sequence ID" value="XM_047416101.1"/>
</dbReference>
<dbReference type="RefSeq" id="XP_054206726.1">
    <property type="nucleotide sequence ID" value="XM_054350751.1"/>
</dbReference>
<dbReference type="PDB" id="1G3M">
    <property type="method" value="X-ray"/>
    <property type="resolution" value="1.70 A"/>
    <property type="chains" value="A/B=1-294"/>
</dbReference>
<dbReference type="PDB" id="1HY3">
    <property type="method" value="X-ray"/>
    <property type="resolution" value="1.80 A"/>
    <property type="chains" value="A/B=1-294"/>
</dbReference>
<dbReference type="PDB" id="4JVL">
    <property type="method" value="X-ray"/>
    <property type="resolution" value="1.94 A"/>
    <property type="chains" value="A/B=1-294"/>
</dbReference>
<dbReference type="PDB" id="4JVM">
    <property type="method" value="X-ray"/>
    <property type="resolution" value="1.99 A"/>
    <property type="chains" value="A/B=1-294"/>
</dbReference>
<dbReference type="PDB" id="4JVN">
    <property type="method" value="X-ray"/>
    <property type="resolution" value="2.05 A"/>
    <property type="chains" value="A/B=1-294"/>
</dbReference>
<dbReference type="PDBsum" id="1G3M"/>
<dbReference type="PDBsum" id="1HY3"/>
<dbReference type="PDBsum" id="4JVL"/>
<dbReference type="PDBsum" id="4JVM"/>
<dbReference type="PDBsum" id="4JVN"/>
<dbReference type="SMR" id="P49888"/>
<dbReference type="BioGRID" id="112660">
    <property type="interactions" value="16"/>
</dbReference>
<dbReference type="FunCoup" id="P49888">
    <property type="interactions" value="133"/>
</dbReference>
<dbReference type="IntAct" id="P49888">
    <property type="interactions" value="12"/>
</dbReference>
<dbReference type="STRING" id="9606.ENSP00000226444"/>
<dbReference type="BindingDB" id="P49888"/>
<dbReference type="ChEMBL" id="CHEMBL2346"/>
<dbReference type="DrugBank" id="DB02902">
    <property type="generic name" value="3'-phospho-5'-adenylyl sulfate"/>
</dbReference>
<dbReference type="DrugBank" id="DB03346">
    <property type="generic name" value="3,3',5,5'-tetrachlorobiphenyl-4,4'-diol"/>
</dbReference>
<dbReference type="DrugBank" id="DB01812">
    <property type="generic name" value="Adenosine 3',5'-diphosphate"/>
</dbReference>
<dbReference type="DrugBank" id="DB00714">
    <property type="generic name" value="Apomorphine"/>
</dbReference>
<dbReference type="DrugBank" id="DB14635">
    <property type="generic name" value="Curcumin sulfate"/>
</dbReference>
<dbReference type="DrugBank" id="DB01176">
    <property type="generic name" value="Cyclizine"/>
</dbReference>
<dbReference type="DrugBank" id="DB00977">
    <property type="generic name" value="Ethinylestradiol"/>
</dbReference>
<dbReference type="DrugBank" id="DB09288">
    <property type="generic name" value="Propacetamol"/>
</dbReference>
<dbReference type="DrugBank" id="DB00675">
    <property type="generic name" value="Tamoxifen"/>
</dbReference>
<dbReference type="DrugBank" id="DB09100">
    <property type="generic name" value="Thyroid, porcine"/>
</dbReference>
<dbReference type="SwissLipids" id="SLP:000001693"/>
<dbReference type="iPTMnet" id="P49888"/>
<dbReference type="PhosphoSitePlus" id="P49888"/>
<dbReference type="BioMuta" id="SULT1E1"/>
<dbReference type="DMDM" id="1711604"/>
<dbReference type="jPOST" id="P49888"/>
<dbReference type="MassIVE" id="P49888"/>
<dbReference type="PaxDb" id="9606-ENSP00000226444"/>
<dbReference type="PeptideAtlas" id="P49888"/>
<dbReference type="ProteomicsDB" id="56163"/>
<dbReference type="Antibodypedia" id="24249">
    <property type="antibodies" value="304 antibodies from 34 providers"/>
</dbReference>
<dbReference type="CPTC" id="P49888">
    <property type="antibodies" value="3 antibodies"/>
</dbReference>
<dbReference type="DNASU" id="6783"/>
<dbReference type="Ensembl" id="ENST00000226444.4">
    <property type="protein sequence ID" value="ENSP00000226444.3"/>
    <property type="gene ID" value="ENSG00000109193.12"/>
</dbReference>
<dbReference type="GeneID" id="6783"/>
<dbReference type="KEGG" id="hsa:6783"/>
<dbReference type="MANE-Select" id="ENST00000226444.4">
    <property type="protein sequence ID" value="ENSP00000226444.3"/>
    <property type="RefSeq nucleotide sequence ID" value="NM_005420.3"/>
    <property type="RefSeq protein sequence ID" value="NP_005411.1"/>
</dbReference>
<dbReference type="AGR" id="HGNC:11377"/>
<dbReference type="CTD" id="6783"/>
<dbReference type="DisGeNET" id="6783"/>
<dbReference type="GeneCards" id="SULT1E1"/>
<dbReference type="HGNC" id="HGNC:11377">
    <property type="gene designation" value="SULT1E1"/>
</dbReference>
<dbReference type="HPA" id="ENSG00000109193">
    <property type="expression patterns" value="Tissue enhanced (intestine, liver, skin, vagina)"/>
</dbReference>
<dbReference type="MIM" id="600043">
    <property type="type" value="gene"/>
</dbReference>
<dbReference type="neXtProt" id="NX_P49888"/>
<dbReference type="OpenTargets" id="ENSG00000109193"/>
<dbReference type="PharmGKB" id="PA340"/>
<dbReference type="VEuPathDB" id="HostDB:ENSG00000109193"/>
<dbReference type="eggNOG" id="KOG1584">
    <property type="taxonomic scope" value="Eukaryota"/>
</dbReference>
<dbReference type="GeneTree" id="ENSGT00940000162261"/>
<dbReference type="HOGENOM" id="CLU_027239_1_2_1"/>
<dbReference type="InParanoid" id="P49888"/>
<dbReference type="OMA" id="VIKVIQF"/>
<dbReference type="OrthoDB" id="205623at2759"/>
<dbReference type="PAN-GO" id="P49888">
    <property type="GO annotations" value="3 GO annotations based on evolutionary models"/>
</dbReference>
<dbReference type="PhylomeDB" id="P49888"/>
<dbReference type="TreeFam" id="TF321745"/>
<dbReference type="BRENDA" id="2.8.2.4">
    <property type="organism ID" value="2681"/>
</dbReference>
<dbReference type="PathwayCommons" id="P49888"/>
<dbReference type="Reactome" id="R-HSA-156584">
    <property type="pathway name" value="Cytosolic sulfonation of small molecules"/>
</dbReference>
<dbReference type="Reactome" id="R-HSA-9753281">
    <property type="pathway name" value="Paracetamol ADME"/>
</dbReference>
<dbReference type="SABIO-RK" id="P49888"/>
<dbReference type="SignaLink" id="P49888"/>
<dbReference type="SIGNOR" id="P49888"/>
<dbReference type="BioGRID-ORCS" id="6783">
    <property type="hits" value="76 hits in 1158 CRISPR screens"/>
</dbReference>
<dbReference type="EvolutionaryTrace" id="P49888"/>
<dbReference type="GeneWiki" id="SULT1E1"/>
<dbReference type="GenomeRNAi" id="6783"/>
<dbReference type="Pharos" id="P49888">
    <property type="development level" value="Tchem"/>
</dbReference>
<dbReference type="PRO" id="PR:P49888"/>
<dbReference type="Proteomes" id="UP000005640">
    <property type="component" value="Chromosome 4"/>
</dbReference>
<dbReference type="RNAct" id="P49888">
    <property type="molecule type" value="protein"/>
</dbReference>
<dbReference type="Bgee" id="ENSG00000109193">
    <property type="expression patterns" value="Expressed in penis and 107 other cell types or tissues"/>
</dbReference>
<dbReference type="ExpressionAtlas" id="P49888">
    <property type="expression patterns" value="baseline and differential"/>
</dbReference>
<dbReference type="GO" id="GO:0005737">
    <property type="term" value="C:cytoplasm"/>
    <property type="evidence" value="ECO:0000318"/>
    <property type="project" value="GO_Central"/>
</dbReference>
<dbReference type="GO" id="GO:0005829">
    <property type="term" value="C:cytosol"/>
    <property type="evidence" value="ECO:0000314"/>
    <property type="project" value="HPA"/>
</dbReference>
<dbReference type="GO" id="GO:0031965">
    <property type="term" value="C:nuclear membrane"/>
    <property type="evidence" value="ECO:0000314"/>
    <property type="project" value="HPA"/>
</dbReference>
<dbReference type="GO" id="GO:0004062">
    <property type="term" value="F:aryl sulfotransferase activity"/>
    <property type="evidence" value="ECO:0000318"/>
    <property type="project" value="GO_Central"/>
</dbReference>
<dbReference type="GO" id="GO:0004304">
    <property type="term" value="F:estrone sulfotransferase activity"/>
    <property type="evidence" value="ECO:0000304"/>
    <property type="project" value="ProtInc"/>
</dbReference>
<dbReference type="GO" id="GO:0047894">
    <property type="term" value="F:flavonol 3-sulfotransferase activity"/>
    <property type="evidence" value="ECO:0000314"/>
    <property type="project" value="BHF-UCL"/>
</dbReference>
<dbReference type="GO" id="GO:0005496">
    <property type="term" value="F:steroid binding"/>
    <property type="evidence" value="ECO:0007669"/>
    <property type="project" value="UniProtKB-KW"/>
</dbReference>
<dbReference type="GO" id="GO:0050294">
    <property type="term" value="F:steroid sulfotransferase activity"/>
    <property type="evidence" value="ECO:0000314"/>
    <property type="project" value="UniProtKB"/>
</dbReference>
<dbReference type="GO" id="GO:0008146">
    <property type="term" value="F:sulfotransferase activity"/>
    <property type="evidence" value="ECO:0000314"/>
    <property type="project" value="MGI"/>
</dbReference>
<dbReference type="GO" id="GO:0050427">
    <property type="term" value="P:3'-phosphoadenosine 5'-phosphosulfate metabolic process"/>
    <property type="evidence" value="ECO:0000314"/>
    <property type="project" value="CAFA"/>
</dbReference>
<dbReference type="GO" id="GO:0006711">
    <property type="term" value="P:estrogen catabolic process"/>
    <property type="evidence" value="ECO:0000314"/>
    <property type="project" value="CAFA"/>
</dbReference>
<dbReference type="GO" id="GO:0008210">
    <property type="term" value="P:estrogen metabolic process"/>
    <property type="evidence" value="ECO:0000314"/>
    <property type="project" value="UniProtKB"/>
</dbReference>
<dbReference type="GO" id="GO:0006068">
    <property type="term" value="P:ethanol catabolic process"/>
    <property type="evidence" value="ECO:0000314"/>
    <property type="project" value="CAFA"/>
</dbReference>
<dbReference type="GO" id="GO:0045600">
    <property type="term" value="P:positive regulation of fat cell differentiation"/>
    <property type="evidence" value="ECO:0000315"/>
    <property type="project" value="CACAO"/>
</dbReference>
<dbReference type="GO" id="GO:0008202">
    <property type="term" value="P:steroid metabolic process"/>
    <property type="evidence" value="ECO:0000304"/>
    <property type="project" value="ProtInc"/>
</dbReference>
<dbReference type="GO" id="GO:0051923">
    <property type="term" value="P:sulfation"/>
    <property type="evidence" value="ECO:0000314"/>
    <property type="project" value="MGI"/>
</dbReference>
<dbReference type="FunFam" id="3.40.50.300:FF:000433">
    <property type="entry name" value="Estrogen sulfotransferase"/>
    <property type="match status" value="1"/>
</dbReference>
<dbReference type="Gene3D" id="3.40.50.300">
    <property type="entry name" value="P-loop containing nucleotide triphosphate hydrolases"/>
    <property type="match status" value="1"/>
</dbReference>
<dbReference type="InterPro" id="IPR027417">
    <property type="entry name" value="P-loop_NTPase"/>
</dbReference>
<dbReference type="InterPro" id="IPR000863">
    <property type="entry name" value="Sulfotransferase_dom"/>
</dbReference>
<dbReference type="PANTHER" id="PTHR11783">
    <property type="entry name" value="SULFOTRANSFERASE SULT"/>
    <property type="match status" value="1"/>
</dbReference>
<dbReference type="Pfam" id="PF00685">
    <property type="entry name" value="Sulfotransfer_1"/>
    <property type="match status" value="1"/>
</dbReference>
<dbReference type="SUPFAM" id="SSF52540">
    <property type="entry name" value="P-loop containing nucleoside triphosphate hydrolases"/>
    <property type="match status" value="1"/>
</dbReference>
<organism>
    <name type="scientific">Homo sapiens</name>
    <name type="common">Human</name>
    <dbReference type="NCBI Taxonomy" id="9606"/>
    <lineage>
        <taxon>Eukaryota</taxon>
        <taxon>Metazoa</taxon>
        <taxon>Chordata</taxon>
        <taxon>Craniata</taxon>
        <taxon>Vertebrata</taxon>
        <taxon>Euteleostomi</taxon>
        <taxon>Mammalia</taxon>
        <taxon>Eutheria</taxon>
        <taxon>Euarchontoglires</taxon>
        <taxon>Primates</taxon>
        <taxon>Haplorrhini</taxon>
        <taxon>Catarrhini</taxon>
        <taxon>Hominidae</taxon>
        <taxon>Homo</taxon>
    </lineage>
</organism>
<name>ST1E1_HUMAN</name>
<accession>P49888</accession>
<accession>Q8N6X5</accession>
<evidence type="ECO:0000250" key="1">
    <source>
        <dbReference type="UniProtKB" id="P49891"/>
    </source>
</evidence>
<evidence type="ECO:0000269" key="2">
    <source>
    </source>
</evidence>
<evidence type="ECO:0000269" key="3">
    <source>
    </source>
</evidence>
<evidence type="ECO:0000269" key="4">
    <source>
    </source>
</evidence>
<evidence type="ECO:0000269" key="5">
    <source>
    </source>
</evidence>
<evidence type="ECO:0000269" key="6">
    <source>
    </source>
</evidence>
<evidence type="ECO:0000269" key="7">
    <source>
    </source>
</evidence>
<evidence type="ECO:0000269" key="8">
    <source ref="5"/>
</evidence>
<evidence type="ECO:0000303" key="9">
    <source>
    </source>
</evidence>
<evidence type="ECO:0000303" key="10">
    <source>
    </source>
</evidence>
<evidence type="ECO:0000305" key="11"/>
<evidence type="ECO:0000305" key="12">
    <source>
    </source>
</evidence>
<evidence type="ECO:0000305" key="13">
    <source>
    </source>
</evidence>
<evidence type="ECO:0000305" key="14">
    <source>
    </source>
</evidence>
<evidence type="ECO:0000305" key="15">
    <source>
    </source>
</evidence>
<evidence type="ECO:0007829" key="16">
    <source>
        <dbReference type="PDB" id="1G3M"/>
    </source>
</evidence>
<protein>
    <recommendedName>
        <fullName>Sulfotransferase 1E1</fullName>
        <shortName>ST1E1</shortName>
        <ecNumber evidence="3 7">2.8.2.4</ecNumber>
    </recommendedName>
    <alternativeName>
        <fullName evidence="9">EST-1</fullName>
    </alternativeName>
    <alternativeName>
        <fullName evidence="10">Estrogen sulfotransferase</fullName>
    </alternativeName>
    <alternativeName>
        <fullName>Sulfotransferase, estrogen-preferring</fullName>
    </alternativeName>
</protein>
<keyword id="KW-0002">3D-structure</keyword>
<keyword id="KW-0963">Cytoplasm</keyword>
<keyword id="KW-0443">Lipid metabolism</keyword>
<keyword id="KW-0446">Lipid-binding</keyword>
<keyword id="KW-1267">Proteomics identification</keyword>
<keyword id="KW-1185">Reference proteome</keyword>
<keyword id="KW-0754">Steroid-binding</keyword>
<keyword id="KW-0808">Transferase</keyword>
<gene>
    <name type="primary">SULT1E1</name>
    <name type="synonym">STE</name>
</gene>
<proteinExistence type="evidence at protein level"/>
<feature type="chain" id="PRO_0000085153" description="Sulfotransferase 1E1">
    <location>
        <begin position="1"/>
        <end position="294"/>
    </location>
</feature>
<feature type="active site" description="Proton acceptor" evidence="2">
    <location>
        <position position="107"/>
    </location>
</feature>
<feature type="binding site" evidence="1">
    <location>
        <begin position="47"/>
        <end position="52"/>
    </location>
    <ligand>
        <name>3'-phosphoadenylyl sulfate</name>
        <dbReference type="ChEBI" id="CHEBI:58339"/>
    </ligand>
</feature>
<feature type="binding site" evidence="1">
    <location>
        <begin position="105"/>
        <end position="107"/>
    </location>
    <ligand>
        <name>substrate</name>
    </ligand>
</feature>
<feature type="binding site" evidence="1">
    <location>
        <position position="129"/>
    </location>
    <ligand>
        <name>3'-phosphoadenylyl sulfate</name>
        <dbReference type="ChEBI" id="CHEBI:58339"/>
    </ligand>
</feature>
<feature type="binding site" evidence="3">
    <location>
        <position position="137"/>
    </location>
    <ligand>
        <name>3'-phosphoadenylyl sulfate</name>
        <dbReference type="ChEBI" id="CHEBI:58339"/>
    </ligand>
</feature>
<feature type="binding site" evidence="1">
    <location>
        <position position="192"/>
    </location>
    <ligand>
        <name>3'-phosphoadenylyl sulfate</name>
        <dbReference type="ChEBI" id="CHEBI:58339"/>
    </ligand>
</feature>
<feature type="binding site" evidence="1">
    <location>
        <begin position="226"/>
        <end position="231"/>
    </location>
    <ligand>
        <name>3'-phosphoadenylyl sulfate</name>
        <dbReference type="ChEBI" id="CHEBI:58339"/>
    </ligand>
</feature>
<feature type="binding site" evidence="1">
    <location>
        <begin position="256"/>
        <end position="258"/>
    </location>
    <ligand>
        <name>3'-phosphoadenylyl sulfate</name>
        <dbReference type="ChEBI" id="CHEBI:58339"/>
    </ligand>
</feature>
<feature type="sequence variant" id="VAR_018907" description="In dbSNP:rs11569705." evidence="8">
    <original>D</original>
    <variation>Y</variation>
    <location>
        <position position="22"/>
    </location>
</feature>
<feature type="mutagenesis site" description="Does not have decreased sulfonation activity towards the estrogens and DHEA." evidence="2">
    <original>K</original>
    <variation>A</variation>
    <location>
        <position position="85"/>
    </location>
</feature>
<feature type="mutagenesis site" description="Complete loss of sulfonation activity towards all substrates tested." evidence="2">
    <original>H</original>
    <variation>A</variation>
    <location>
        <position position="107"/>
    </location>
</feature>
<feature type="mutagenesis site" description="Decreased gradually the sulfotransferase activity." evidence="3">
    <original>S</original>
    <variation>A</variation>
    <location>
        <position position="137"/>
    </location>
</feature>
<feature type="mutagenesis site" description="Decreased gradually the sulfotransferase activity." evidence="3">
    <original>S</original>
    <variation>C</variation>
    <location>
        <position position="137"/>
    </location>
</feature>
<feature type="mutagenesis site" description="Substrate specificity constants for estradiol and estrone are reduced. Dramatic 400-fold increase in the ability to sulfonate dopamine." evidence="2">
    <original>V</original>
    <variation>E</variation>
    <location>
        <position position="145"/>
    </location>
</feature>
<feature type="mutagenesis site" description="Does not prevent the formation of homodimer." evidence="3">
    <original>V</original>
    <variation>E</variation>
    <location>
        <position position="269"/>
    </location>
</feature>
<feature type="sequence conflict" description="In Ref. 6; AAH27956." evidence="11" ref="6">
    <original>F</original>
    <variation>L</variation>
    <location>
        <position position="154"/>
    </location>
</feature>
<feature type="helix" evidence="16">
    <location>
        <begin position="4"/>
        <end position="10"/>
    </location>
</feature>
<feature type="strand" evidence="16">
    <location>
        <begin position="11"/>
        <end position="14"/>
    </location>
</feature>
<feature type="strand" evidence="16">
    <location>
        <begin position="17"/>
        <end position="20"/>
    </location>
</feature>
<feature type="helix" evidence="16">
    <location>
        <begin position="21"/>
        <end position="25"/>
    </location>
</feature>
<feature type="helix" evidence="16">
    <location>
        <begin position="27"/>
        <end position="31"/>
    </location>
</feature>
<feature type="strand" evidence="16">
    <location>
        <begin position="40"/>
        <end position="45"/>
    </location>
</feature>
<feature type="helix" evidence="16">
    <location>
        <begin position="50"/>
        <end position="61"/>
    </location>
</feature>
<feature type="turn" evidence="16">
    <location>
        <begin position="62"/>
        <end position="64"/>
    </location>
</feature>
<feature type="helix" evidence="16">
    <location>
        <begin position="66"/>
        <end position="69"/>
    </location>
</feature>
<feature type="strand" evidence="16">
    <location>
        <begin position="70"/>
        <end position="72"/>
    </location>
</feature>
<feature type="helix" evidence="16">
    <location>
        <begin position="74"/>
        <end position="77"/>
    </location>
</feature>
<feature type="turn" evidence="16">
    <location>
        <begin position="86"/>
        <end position="88"/>
    </location>
</feature>
<feature type="helix" evidence="16">
    <location>
        <begin position="91"/>
        <end position="96"/>
    </location>
</feature>
<feature type="strand" evidence="16">
    <location>
        <begin position="103"/>
        <end position="106"/>
    </location>
</feature>
<feature type="helix" evidence="16">
    <location>
        <begin position="110"/>
        <end position="112"/>
    </location>
</feature>
<feature type="helix" evidence="16">
    <location>
        <begin position="115"/>
        <end position="119"/>
    </location>
</feature>
<feature type="strand" evidence="16">
    <location>
        <begin position="123"/>
        <end position="128"/>
    </location>
</feature>
<feature type="helix" evidence="16">
    <location>
        <begin position="131"/>
        <end position="144"/>
    </location>
</feature>
<feature type="helix" evidence="16">
    <location>
        <begin position="154"/>
        <end position="162"/>
    </location>
</feature>
<feature type="helix" evidence="16">
    <location>
        <begin position="171"/>
        <end position="181"/>
    </location>
</feature>
<feature type="strand" evidence="16">
    <location>
        <begin position="187"/>
        <end position="191"/>
    </location>
</feature>
<feature type="helix" evidence="16">
    <location>
        <begin position="192"/>
        <end position="197"/>
    </location>
</feature>
<feature type="helix" evidence="16">
    <location>
        <begin position="199"/>
        <end position="209"/>
    </location>
</feature>
<feature type="helix" evidence="16">
    <location>
        <begin position="216"/>
        <end position="225"/>
    </location>
</feature>
<feature type="helix" evidence="16">
    <location>
        <begin position="228"/>
        <end position="233"/>
    </location>
</feature>
<feature type="turn" evidence="16">
    <location>
        <begin position="235"/>
        <end position="237"/>
    </location>
</feature>
<feature type="turn" evidence="16">
    <location>
        <begin position="244"/>
        <end position="246"/>
    </location>
</feature>
<feature type="turn" evidence="16">
    <location>
        <begin position="249"/>
        <end position="251"/>
    </location>
</feature>
<feature type="helix" evidence="16">
    <location>
        <begin position="262"/>
        <end position="265"/>
    </location>
</feature>
<feature type="helix" evidence="16">
    <location>
        <begin position="269"/>
        <end position="283"/>
    </location>
</feature>
<reference key="1">
    <citation type="journal article" date="1994" name="Biochem. Biophys. Res. Commun.">
        <title>Human liver estrogen sulfotransferase: identification by cDNA cloning and expression.</title>
        <authorList>
            <person name="Aksoy I.A."/>
            <person name="Wood T.C."/>
            <person name="Weinshilboum R.M."/>
        </authorList>
    </citation>
    <scope>NUCLEOTIDE SEQUENCE [MRNA]</scope>
    <source>
        <tissue>Liver</tissue>
    </source>
</reference>
<reference key="2">
    <citation type="journal article" date="1995" name="Genomics">
        <title>Human estrogen sulfotransferase gene (STE): cloning, structure, and chromosomal localization.</title>
        <authorList>
            <person name="Her C."/>
            <person name="Aksoy I.A."/>
            <person name="Kimura S."/>
            <person name="Brandriff B.F."/>
            <person name="Wasmuth J.J."/>
            <person name="Weinshilboum R.M."/>
        </authorList>
    </citation>
    <scope>NUCLEOTIDE SEQUENCE [GENOMIC DNA]</scope>
    <source>
        <tissue>Liver</tissue>
    </source>
</reference>
<reference key="3">
    <citation type="journal article" date="1995" name="J. Steroid Biochem. Mol. Biol.">
        <title>Bacterial expression and characterization of a cDNA for human liver estrogen sulfotransferase.</title>
        <authorList>
            <person name="Falany C.N."/>
            <person name="Krasnykh V."/>
            <person name="Falany J.L."/>
        </authorList>
    </citation>
    <scope>NUCLEOTIDE SEQUENCE [MRNA]</scope>
    <scope>CATALYTIC ACTIVITY</scope>
    <scope>SUBSTRATE SPECIFICITY</scope>
    <scope>FUNCTION</scope>
    <source>
        <tissue>Liver</tissue>
    </source>
</reference>
<reference key="4">
    <citation type="journal article" date="1999" name="Mol. Hum. Reprod.">
        <title>Regulation of sulphotransferase expression in the endometrium during the menstrual cycle, by oral contraceptives and during early pregnancy.</title>
        <authorList>
            <person name="Rubin G.L."/>
            <person name="Harrold A.J."/>
            <person name="Mills J.A."/>
            <person name="Falany C.N."/>
            <person name="Coughtrie M.W.H."/>
        </authorList>
    </citation>
    <scope>NUCLEOTIDE SEQUENCE [MRNA]</scope>
</reference>
<reference key="5">
    <citation type="submission" date="2003-10" db="EMBL/GenBank/DDBJ databases">
        <authorList>
            <consortium name="NIEHS SNPs program"/>
        </authorList>
    </citation>
    <scope>NUCLEOTIDE SEQUENCE [GENOMIC DNA]</scope>
    <scope>VARIANT TYR-22</scope>
</reference>
<reference key="6">
    <citation type="journal article" date="2004" name="Genome Res.">
        <title>The status, quality, and expansion of the NIH full-length cDNA project: the Mammalian Gene Collection (MGC).</title>
        <authorList>
            <consortium name="The MGC Project Team"/>
        </authorList>
    </citation>
    <scope>NUCLEOTIDE SEQUENCE [LARGE SCALE MRNA]</scope>
    <source>
        <tissue>Lung</tissue>
    </source>
</reference>
<reference key="7">
    <citation type="submission" date="1997-04" db="EMBL/GenBank/DDBJ databases">
        <authorList>
            <person name="Her C."/>
            <person name="Szumlanski C."/>
            <person name="Aksoy I."/>
            <person name="Weinshilboum R.M."/>
        </authorList>
    </citation>
    <scope>NUCLEOTIDE SEQUENCE [MRNA] OF 182-294</scope>
    <source>
        <tissue>Liver</tissue>
        <tissue>Spleen</tissue>
    </source>
</reference>
<reference key="8">
    <citation type="journal article" date="2000" name="Biochem. Biophys. Res. Commun.">
        <title>Site-directed mutagenesis of the substrate-binding cleft of human estrogen sulfotransferase.</title>
        <authorList>
            <person name="Hempel N."/>
            <person name="Barnett A.C."/>
            <person name="Bolton-Grob R.M."/>
            <person name="Liyou N.E."/>
            <person name="McManus M.E."/>
        </authorList>
    </citation>
    <scope>MUTAGENESIS OF LYS-85; HIS-107 AND VAL-145</scope>
    <scope>CATALYTIC ACTIVITY</scope>
    <scope>FUNCTION</scope>
    <scope>SUBCELLULAR LOCATION</scope>
    <scope>BIOPHYSICOCHEMICAL PROPERTIES</scope>
    <scope>ACTIVITY REGULATION</scope>
    <scope>ACTIVE SITE</scope>
</reference>
<reference key="9">
    <citation type="journal article" date="2009" name="Drug Metab. Dispos.">
        <title>24-hydroxycholesterol sulfation by human cytosolic sulfotransferases: formation of monosulfates and disulfates, molecular modeling, sulfatase sensitivity, and inhibition of liver x receptor activation.</title>
        <authorList>
            <person name="Cook I.T."/>
            <person name="Duniec-Dmuchowski Z."/>
            <person name="Kocarek T.A."/>
            <person name="Runge-Morris M."/>
            <person name="Falany C.N."/>
        </authorList>
    </citation>
    <scope>CATALYTIC ACTIVITY</scope>
    <scope>BIOPHYSICOCHEMICAL PROPERTIES</scope>
    <scope>FUNCTION</scope>
</reference>
<reference key="10">
    <citation type="journal article" date="2022" name="Nature">
        <title>A gut-derived metabolite alters brain activity and anxiety behaviour in mice.</title>
        <authorList>
            <person name="Needham B.D."/>
            <person name="Funabashi M."/>
            <person name="Adame M.D."/>
            <person name="Wang Z."/>
            <person name="Boktor J.C."/>
            <person name="Haney J."/>
            <person name="Wu W.L."/>
            <person name="Rabut C."/>
            <person name="Ladinsky M.S."/>
            <person name="Hwang S.J."/>
            <person name="Guo Y."/>
            <person name="Zhu Q."/>
            <person name="Griffiths J.A."/>
            <person name="Knight R."/>
            <person name="Bjorkman P.J."/>
            <person name="Shapiro M.G."/>
            <person name="Geschwind D.H."/>
            <person name="Holschneider D.P."/>
            <person name="Fischbach M.A."/>
            <person name="Mazmanian S.K."/>
        </authorList>
    </citation>
    <scope>FUNCTION</scope>
    <scope>CATALYTIC ACTIVITY</scope>
</reference>
<reference key="11">
    <citation type="journal article" date="2002" name="J. Biol. Chem.">
        <title>Crystal structure of the human estrogen sulfotransferase-PAPS complex: evidence for catalytic role of Ser137 in the sulfuryl transfer reaction.</title>
        <authorList>
            <person name="Pedersen L.C."/>
            <person name="Petrotchenko E."/>
            <person name="Shevtsov S."/>
            <person name="Negishi M."/>
        </authorList>
    </citation>
    <scope>X-RAY CRYSTALLOGRAPHY (1.8 ANGSTROMS) OF MUTANT VAL-269 IN COMPLEX WITH 3'-PHOSPHATE-ADENOSINE-5'-PHOSPHATE SULFATE (PAPS)</scope>
    <scope>FUNCTION</scope>
    <scope>CATALYTIC ACTIVITY</scope>
    <scope>MUTAGENESIS OF SER-137</scope>
    <scope>BIOPHYSICOCHEMICAL PROPERTIES</scope>
    <scope>SUBUNIT</scope>
</reference>
<reference key="12">
    <citation type="journal article" date="2003" name="Environ. Health Perspect.">
        <title>Crystallographic analysis of a hydroxylated polychlorinated biphenyl (OH-PCB) bound to the catalytic estrogen binding site of human estrogen sulfotransferase.</title>
        <authorList>
            <person name="Shevtsov S."/>
            <person name="Petrotchenko E.V."/>
            <person name="Pedersen L.C."/>
            <person name="Negishi M."/>
        </authorList>
    </citation>
    <scope>X-RAY CRYSTALLOGRAPHY (1.7 ANGSTROMS) IN COMPLEX WITH ADENOSINE 3',5'-BISPHOSPHATE (PAP) AND A HYDROXYLATED POLYCHLORINATED BIPHENYL (OH-PCB)</scope>
</reference>
<sequence>MNSELDYYEKFEEVHGILMYKDFVKYWDNVEAFQARPDDLVIATYPKSGTTWVSEIVYMIYKEGDVEKCKEDVIFNRIPFLECRKENLMNGVKQLDEMNSPRIVKTHLPPELLPASFWEKDCKIIYLCRNAKDVAVSFYYFFLMVAGHPNPGSFPEFVEKFMQGQVPYGSWYKHVKSWWEKGKSPRVLFLFYEDLKEDIRKEVIKLIHFLERKPSEELVDRIIHHTSFQEMKNNPSTNYTTLPDEIMNQKLSPFMRKGITGDWKNHFTVALNEKFDKHYEQQMKESTLKFRTEI</sequence>